<gene>
    <name evidence="1" type="primary">fmt</name>
    <name type="ordered locus">Sbal195_0030</name>
</gene>
<sequence>MKPLNIIFAGTPDFAARHLQALLNSHHNVIGVYTQPDRPAGRGKKLTASPVKELAVANNIPVYQPGSLRKEPAQQELAALNADIMVVVAYGLILPKVVLDTPRLGCINVHGSILPRWRGAAPIQRALWAGDKETGVTVMQMDVGLDTGDMLLKTTLPIEDSDTSASLYEKLAEQGPVALLQALEGLVNGTLAAEKQDEALANYAEKLSKEEARLDWNKSAQQLWQEVRAFNPWPVSYFEHQGNTIKVWQTQVSETTSTAAPGTIISASKKGIEVATADGVLTLLNMQLPGKKPLNVADILNARGEWFSPNTRLANEAQ</sequence>
<organism>
    <name type="scientific">Shewanella baltica (strain OS195)</name>
    <dbReference type="NCBI Taxonomy" id="399599"/>
    <lineage>
        <taxon>Bacteria</taxon>
        <taxon>Pseudomonadati</taxon>
        <taxon>Pseudomonadota</taxon>
        <taxon>Gammaproteobacteria</taxon>
        <taxon>Alteromonadales</taxon>
        <taxon>Shewanellaceae</taxon>
        <taxon>Shewanella</taxon>
    </lineage>
</organism>
<feature type="chain" id="PRO_1000077319" description="Methionyl-tRNA formyltransferase">
    <location>
        <begin position="1"/>
        <end position="318"/>
    </location>
</feature>
<feature type="binding site" evidence="1">
    <location>
        <begin position="112"/>
        <end position="115"/>
    </location>
    <ligand>
        <name>(6S)-5,6,7,8-tetrahydrofolate</name>
        <dbReference type="ChEBI" id="CHEBI:57453"/>
    </ligand>
</feature>
<comment type="function">
    <text evidence="1">Attaches a formyl group to the free amino group of methionyl-tRNA(fMet). The formyl group appears to play a dual role in the initiator identity of N-formylmethionyl-tRNA by promoting its recognition by IF2 and preventing the misappropriation of this tRNA by the elongation apparatus.</text>
</comment>
<comment type="catalytic activity">
    <reaction evidence="1">
        <text>L-methionyl-tRNA(fMet) + (6R)-10-formyltetrahydrofolate = N-formyl-L-methionyl-tRNA(fMet) + (6S)-5,6,7,8-tetrahydrofolate + H(+)</text>
        <dbReference type="Rhea" id="RHEA:24380"/>
        <dbReference type="Rhea" id="RHEA-COMP:9952"/>
        <dbReference type="Rhea" id="RHEA-COMP:9953"/>
        <dbReference type="ChEBI" id="CHEBI:15378"/>
        <dbReference type="ChEBI" id="CHEBI:57453"/>
        <dbReference type="ChEBI" id="CHEBI:78530"/>
        <dbReference type="ChEBI" id="CHEBI:78844"/>
        <dbReference type="ChEBI" id="CHEBI:195366"/>
        <dbReference type="EC" id="2.1.2.9"/>
    </reaction>
</comment>
<comment type="similarity">
    <text evidence="1">Belongs to the Fmt family.</text>
</comment>
<protein>
    <recommendedName>
        <fullName evidence="1">Methionyl-tRNA formyltransferase</fullName>
        <ecNumber evidence="1">2.1.2.9</ecNumber>
    </recommendedName>
</protein>
<accession>A9KUA1</accession>
<name>FMT_SHEB9</name>
<evidence type="ECO:0000255" key="1">
    <source>
        <dbReference type="HAMAP-Rule" id="MF_00182"/>
    </source>
</evidence>
<reference key="1">
    <citation type="submission" date="2007-11" db="EMBL/GenBank/DDBJ databases">
        <title>Complete sequence of chromosome of Shewanella baltica OS195.</title>
        <authorList>
            <consortium name="US DOE Joint Genome Institute"/>
            <person name="Copeland A."/>
            <person name="Lucas S."/>
            <person name="Lapidus A."/>
            <person name="Barry K."/>
            <person name="Glavina del Rio T."/>
            <person name="Dalin E."/>
            <person name="Tice H."/>
            <person name="Pitluck S."/>
            <person name="Chain P."/>
            <person name="Malfatti S."/>
            <person name="Shin M."/>
            <person name="Vergez L."/>
            <person name="Schmutz J."/>
            <person name="Larimer F."/>
            <person name="Land M."/>
            <person name="Hauser L."/>
            <person name="Kyrpides N."/>
            <person name="Kim E."/>
            <person name="Brettar I."/>
            <person name="Rodrigues J."/>
            <person name="Konstantinidis K."/>
            <person name="Klappenbach J."/>
            <person name="Hofle M."/>
            <person name="Tiedje J."/>
            <person name="Richardson P."/>
        </authorList>
    </citation>
    <scope>NUCLEOTIDE SEQUENCE [LARGE SCALE GENOMIC DNA]</scope>
    <source>
        <strain>OS195</strain>
    </source>
</reference>
<proteinExistence type="inferred from homology"/>
<dbReference type="EC" id="2.1.2.9" evidence="1"/>
<dbReference type="EMBL" id="CP000891">
    <property type="protein sequence ID" value="ABX47212.1"/>
    <property type="molecule type" value="Genomic_DNA"/>
</dbReference>
<dbReference type="RefSeq" id="WP_006084794.1">
    <property type="nucleotide sequence ID" value="NC_009997.1"/>
</dbReference>
<dbReference type="SMR" id="A9KUA1"/>
<dbReference type="GeneID" id="11770397"/>
<dbReference type="KEGG" id="sbn:Sbal195_0030"/>
<dbReference type="HOGENOM" id="CLU_033347_1_2_6"/>
<dbReference type="Proteomes" id="UP000000770">
    <property type="component" value="Chromosome"/>
</dbReference>
<dbReference type="GO" id="GO:0005829">
    <property type="term" value="C:cytosol"/>
    <property type="evidence" value="ECO:0007669"/>
    <property type="project" value="TreeGrafter"/>
</dbReference>
<dbReference type="GO" id="GO:0004479">
    <property type="term" value="F:methionyl-tRNA formyltransferase activity"/>
    <property type="evidence" value="ECO:0007669"/>
    <property type="project" value="UniProtKB-UniRule"/>
</dbReference>
<dbReference type="CDD" id="cd08646">
    <property type="entry name" value="FMT_core_Met-tRNA-FMT_N"/>
    <property type="match status" value="1"/>
</dbReference>
<dbReference type="CDD" id="cd08704">
    <property type="entry name" value="Met_tRNA_FMT_C"/>
    <property type="match status" value="1"/>
</dbReference>
<dbReference type="FunFam" id="3.40.50.12230:FF:000001">
    <property type="entry name" value="Methionyl-tRNA formyltransferase"/>
    <property type="match status" value="1"/>
</dbReference>
<dbReference type="FunFam" id="3.40.50.170:FF:000003">
    <property type="entry name" value="Methionyl-tRNA formyltransferase"/>
    <property type="match status" value="1"/>
</dbReference>
<dbReference type="Gene3D" id="3.10.25.10">
    <property type="entry name" value="Formyl transferase, C-terminal domain"/>
    <property type="match status" value="1"/>
</dbReference>
<dbReference type="Gene3D" id="3.40.50.170">
    <property type="entry name" value="Formyl transferase, N-terminal domain"/>
    <property type="match status" value="1"/>
</dbReference>
<dbReference type="HAMAP" id="MF_00182">
    <property type="entry name" value="Formyl_trans"/>
    <property type="match status" value="1"/>
</dbReference>
<dbReference type="InterPro" id="IPR005794">
    <property type="entry name" value="Fmt"/>
</dbReference>
<dbReference type="InterPro" id="IPR005793">
    <property type="entry name" value="Formyl_trans_C"/>
</dbReference>
<dbReference type="InterPro" id="IPR037022">
    <property type="entry name" value="Formyl_trans_C_sf"/>
</dbReference>
<dbReference type="InterPro" id="IPR002376">
    <property type="entry name" value="Formyl_transf_N"/>
</dbReference>
<dbReference type="InterPro" id="IPR036477">
    <property type="entry name" value="Formyl_transf_N_sf"/>
</dbReference>
<dbReference type="InterPro" id="IPR011034">
    <property type="entry name" value="Formyl_transferase-like_C_sf"/>
</dbReference>
<dbReference type="InterPro" id="IPR001555">
    <property type="entry name" value="GART_AS"/>
</dbReference>
<dbReference type="InterPro" id="IPR044135">
    <property type="entry name" value="Met-tRNA-FMT_C"/>
</dbReference>
<dbReference type="InterPro" id="IPR041711">
    <property type="entry name" value="Met-tRNA-FMT_N"/>
</dbReference>
<dbReference type="NCBIfam" id="TIGR00460">
    <property type="entry name" value="fmt"/>
    <property type="match status" value="1"/>
</dbReference>
<dbReference type="PANTHER" id="PTHR11138">
    <property type="entry name" value="METHIONYL-TRNA FORMYLTRANSFERASE"/>
    <property type="match status" value="1"/>
</dbReference>
<dbReference type="PANTHER" id="PTHR11138:SF5">
    <property type="entry name" value="METHIONYL-TRNA FORMYLTRANSFERASE, MITOCHONDRIAL"/>
    <property type="match status" value="1"/>
</dbReference>
<dbReference type="Pfam" id="PF02911">
    <property type="entry name" value="Formyl_trans_C"/>
    <property type="match status" value="1"/>
</dbReference>
<dbReference type="Pfam" id="PF00551">
    <property type="entry name" value="Formyl_trans_N"/>
    <property type="match status" value="1"/>
</dbReference>
<dbReference type="SUPFAM" id="SSF50486">
    <property type="entry name" value="FMT C-terminal domain-like"/>
    <property type="match status" value="1"/>
</dbReference>
<dbReference type="SUPFAM" id="SSF53328">
    <property type="entry name" value="Formyltransferase"/>
    <property type="match status" value="1"/>
</dbReference>
<dbReference type="PROSITE" id="PS00373">
    <property type="entry name" value="GART"/>
    <property type="match status" value="1"/>
</dbReference>
<keyword id="KW-0648">Protein biosynthesis</keyword>
<keyword id="KW-0808">Transferase</keyword>